<dbReference type="EMBL" id="CP000388">
    <property type="protein sequence ID" value="ABG42356.1"/>
    <property type="molecule type" value="Genomic_DNA"/>
</dbReference>
<dbReference type="RefSeq" id="WP_011576564.1">
    <property type="nucleotide sequence ID" value="NC_008228.1"/>
</dbReference>
<dbReference type="SMR" id="Q15P32"/>
<dbReference type="STRING" id="342610.Patl_3856"/>
<dbReference type="KEGG" id="pat:Patl_3856"/>
<dbReference type="eggNOG" id="COG2919">
    <property type="taxonomic scope" value="Bacteria"/>
</dbReference>
<dbReference type="HOGENOM" id="CLU_134863_5_2_6"/>
<dbReference type="OrthoDB" id="7061211at2"/>
<dbReference type="Proteomes" id="UP000001981">
    <property type="component" value="Chromosome"/>
</dbReference>
<dbReference type="GO" id="GO:0032153">
    <property type="term" value="C:cell division site"/>
    <property type="evidence" value="ECO:0007669"/>
    <property type="project" value="UniProtKB-UniRule"/>
</dbReference>
<dbReference type="GO" id="GO:0030428">
    <property type="term" value="C:cell septum"/>
    <property type="evidence" value="ECO:0007669"/>
    <property type="project" value="TreeGrafter"/>
</dbReference>
<dbReference type="GO" id="GO:0005886">
    <property type="term" value="C:plasma membrane"/>
    <property type="evidence" value="ECO:0007669"/>
    <property type="project" value="UniProtKB-SubCell"/>
</dbReference>
<dbReference type="GO" id="GO:0043093">
    <property type="term" value="P:FtsZ-dependent cytokinesis"/>
    <property type="evidence" value="ECO:0007669"/>
    <property type="project" value="UniProtKB-UniRule"/>
</dbReference>
<dbReference type="HAMAP" id="MF_00599">
    <property type="entry name" value="FtsB"/>
    <property type="match status" value="1"/>
</dbReference>
<dbReference type="InterPro" id="IPR023081">
    <property type="entry name" value="Cell_div_FtsB"/>
</dbReference>
<dbReference type="InterPro" id="IPR007060">
    <property type="entry name" value="FtsL/DivIC"/>
</dbReference>
<dbReference type="NCBIfam" id="NF002058">
    <property type="entry name" value="PRK00888.1"/>
    <property type="match status" value="1"/>
</dbReference>
<dbReference type="PANTHER" id="PTHR37485">
    <property type="entry name" value="CELL DIVISION PROTEIN FTSB"/>
    <property type="match status" value="1"/>
</dbReference>
<dbReference type="PANTHER" id="PTHR37485:SF1">
    <property type="entry name" value="CELL DIVISION PROTEIN FTSB"/>
    <property type="match status" value="1"/>
</dbReference>
<dbReference type="Pfam" id="PF04977">
    <property type="entry name" value="DivIC"/>
    <property type="match status" value="1"/>
</dbReference>
<organism>
    <name type="scientific">Pseudoalteromonas atlantica (strain T6c / ATCC BAA-1087)</name>
    <dbReference type="NCBI Taxonomy" id="3042615"/>
    <lineage>
        <taxon>Bacteria</taxon>
        <taxon>Pseudomonadati</taxon>
        <taxon>Pseudomonadota</taxon>
        <taxon>Gammaproteobacteria</taxon>
        <taxon>Alteromonadales</taxon>
        <taxon>Alteromonadaceae</taxon>
        <taxon>Paraglaciecola</taxon>
    </lineage>
</organism>
<feature type="chain" id="PRO_1000025713" description="Cell division protein FtsB">
    <location>
        <begin position="1"/>
        <end position="92"/>
    </location>
</feature>
<feature type="topological domain" description="Cytoplasmic" evidence="1">
    <location>
        <begin position="1"/>
        <end position="3"/>
    </location>
</feature>
<feature type="transmembrane region" description="Helical" evidence="1">
    <location>
        <begin position="4"/>
        <end position="21"/>
    </location>
</feature>
<feature type="topological domain" description="Periplasmic" evidence="1">
    <location>
        <begin position="22"/>
        <end position="92"/>
    </location>
</feature>
<feature type="coiled-coil region" evidence="1">
    <location>
        <begin position="31"/>
        <end position="74"/>
    </location>
</feature>
<keyword id="KW-0131">Cell cycle</keyword>
<keyword id="KW-0132">Cell division</keyword>
<keyword id="KW-0997">Cell inner membrane</keyword>
<keyword id="KW-1003">Cell membrane</keyword>
<keyword id="KW-0175">Coiled coil</keyword>
<keyword id="KW-0472">Membrane</keyword>
<keyword id="KW-0812">Transmembrane</keyword>
<keyword id="KW-1133">Transmembrane helix</keyword>
<comment type="function">
    <text evidence="1">Essential cell division protein. May link together the upstream cell division proteins, which are predominantly cytoplasmic, with the downstream cell division proteins, which are predominantly periplasmic.</text>
</comment>
<comment type="subunit">
    <text evidence="1">Part of a complex composed of FtsB, FtsL and FtsQ.</text>
</comment>
<comment type="subcellular location">
    <subcellularLocation>
        <location evidence="1">Cell inner membrane</location>
        <topology evidence="1">Single-pass type II membrane protein</topology>
    </subcellularLocation>
    <text evidence="1">Localizes to the division septum.</text>
</comment>
<comment type="similarity">
    <text evidence="1">Belongs to the FtsB family.</text>
</comment>
<gene>
    <name evidence="1" type="primary">ftsB</name>
    <name type="ordered locus">Patl_3856</name>
</gene>
<protein>
    <recommendedName>
        <fullName evidence="1">Cell division protein FtsB</fullName>
    </recommendedName>
</protein>
<reference key="1">
    <citation type="submission" date="2006-06" db="EMBL/GenBank/DDBJ databases">
        <title>Complete sequence of Pseudoalteromonas atlantica T6c.</title>
        <authorList>
            <consortium name="US DOE Joint Genome Institute"/>
            <person name="Copeland A."/>
            <person name="Lucas S."/>
            <person name="Lapidus A."/>
            <person name="Barry K."/>
            <person name="Detter J.C."/>
            <person name="Glavina del Rio T."/>
            <person name="Hammon N."/>
            <person name="Israni S."/>
            <person name="Dalin E."/>
            <person name="Tice H."/>
            <person name="Pitluck S."/>
            <person name="Saunders E."/>
            <person name="Brettin T."/>
            <person name="Bruce D."/>
            <person name="Han C."/>
            <person name="Tapia R."/>
            <person name="Gilna P."/>
            <person name="Schmutz J."/>
            <person name="Larimer F."/>
            <person name="Land M."/>
            <person name="Hauser L."/>
            <person name="Kyrpides N."/>
            <person name="Kim E."/>
            <person name="Karls A.C."/>
            <person name="Bartlett D."/>
            <person name="Higgins B.P."/>
            <person name="Richardson P."/>
        </authorList>
    </citation>
    <scope>NUCLEOTIDE SEQUENCE [LARGE SCALE GENOMIC DNA]</scope>
    <source>
        <strain>T6c / ATCC BAA-1087</strain>
    </source>
</reference>
<accession>Q15P32</accession>
<sequence length="92" mass="10575">MKVVPILLFVLLAALQYRLWFGKNSIPEYVAMEKSVAEQAEQNTELLQRNNLLKADIQDLKVGLEAVEERARNELGLIKQGETFYRILPSEE</sequence>
<proteinExistence type="inferred from homology"/>
<name>FTSB_PSEA6</name>
<evidence type="ECO:0000255" key="1">
    <source>
        <dbReference type="HAMAP-Rule" id="MF_00599"/>
    </source>
</evidence>